<reference key="1">
    <citation type="submission" date="2008-06" db="EMBL/GenBank/DDBJ databases">
        <title>Complete sequence of Chloroherpeton thalassium ATCC 35110.</title>
        <authorList>
            <consortium name="US DOE Joint Genome Institute"/>
            <person name="Lucas S."/>
            <person name="Copeland A."/>
            <person name="Lapidus A."/>
            <person name="Glavina del Rio T."/>
            <person name="Dalin E."/>
            <person name="Tice H."/>
            <person name="Bruce D."/>
            <person name="Goodwin L."/>
            <person name="Pitluck S."/>
            <person name="Schmutz J."/>
            <person name="Larimer F."/>
            <person name="Land M."/>
            <person name="Hauser L."/>
            <person name="Kyrpides N."/>
            <person name="Mikhailova N."/>
            <person name="Liu Z."/>
            <person name="Li T."/>
            <person name="Zhao F."/>
            <person name="Overmann J."/>
            <person name="Bryant D.A."/>
            <person name="Richardson P."/>
        </authorList>
    </citation>
    <scope>NUCLEOTIDE SEQUENCE [LARGE SCALE GENOMIC DNA]</scope>
    <source>
        <strain>ATCC 35110 / GB-78</strain>
    </source>
</reference>
<accession>B3QZE1</accession>
<proteinExistence type="inferred from homology"/>
<gene>
    <name evidence="1" type="primary">bchL</name>
    <name type="ordered locus">Ctha_1371</name>
</gene>
<sequence length="274" mass="29302">MGIVIAVYGKGGIGKSTNSANLSTALAMKGASVLQIGCDPKHDSTFPITGHLQKTVIEVLEEVGFHHEEVMFEDVVKKGFANVDAIEAGGPPAGSGCGGYVVGETVKLLQEFGVYDKYDVILFDVLGDVVCGGFSAPLNYADYALIVATNDFDSIFAANRLCMAIEQKSARSKVQLAGIIGNKVDYVNGGGTNVLDKFADKVNTKVVAKVPMHDLIRRSRLAGKTLFQMEEDGQDVCIAPYLALAEQLLSEKPFATVPKSLGDREIFELMGGWM</sequence>
<name>BCHL_CHLT3</name>
<protein>
    <recommendedName>
        <fullName evidence="1">Light-independent protochlorophyllide reductase iron-sulfur ATP-binding protein</fullName>
        <shortName evidence="1">DPOR subunit L</shortName>
        <shortName evidence="1">LI-POR subunit L</shortName>
        <ecNumber evidence="1">1.3.7.7</ecNumber>
    </recommendedName>
</protein>
<organism>
    <name type="scientific">Chloroherpeton thalassium (strain ATCC 35110 / GB-78)</name>
    <dbReference type="NCBI Taxonomy" id="517418"/>
    <lineage>
        <taxon>Bacteria</taxon>
        <taxon>Pseudomonadati</taxon>
        <taxon>Chlorobiota</taxon>
        <taxon>Chlorobiia</taxon>
        <taxon>Chlorobiales</taxon>
        <taxon>Chloroherpetonaceae</taxon>
        <taxon>Chloroherpeton</taxon>
    </lineage>
</organism>
<dbReference type="EC" id="1.3.7.7" evidence="1"/>
<dbReference type="EMBL" id="CP001100">
    <property type="protein sequence ID" value="ACF13834.1"/>
    <property type="molecule type" value="Genomic_DNA"/>
</dbReference>
<dbReference type="RefSeq" id="WP_012499918.1">
    <property type="nucleotide sequence ID" value="NC_011026.1"/>
</dbReference>
<dbReference type="SMR" id="B3QZE1"/>
<dbReference type="STRING" id="517418.Ctha_1371"/>
<dbReference type="KEGG" id="cts:Ctha_1371"/>
<dbReference type="eggNOG" id="COG1348">
    <property type="taxonomic scope" value="Bacteria"/>
</dbReference>
<dbReference type="HOGENOM" id="CLU_059373_2_0_10"/>
<dbReference type="OrthoDB" id="9778641at2"/>
<dbReference type="UniPathway" id="UPA00671"/>
<dbReference type="Proteomes" id="UP000001208">
    <property type="component" value="Chromosome"/>
</dbReference>
<dbReference type="GO" id="GO:0051539">
    <property type="term" value="F:4 iron, 4 sulfur cluster binding"/>
    <property type="evidence" value="ECO:0007669"/>
    <property type="project" value="UniProtKB-UniRule"/>
</dbReference>
<dbReference type="GO" id="GO:0005524">
    <property type="term" value="F:ATP binding"/>
    <property type="evidence" value="ECO:0007669"/>
    <property type="project" value="UniProtKB-UniRule"/>
</dbReference>
<dbReference type="GO" id="GO:0046872">
    <property type="term" value="F:metal ion binding"/>
    <property type="evidence" value="ECO:0007669"/>
    <property type="project" value="UniProtKB-KW"/>
</dbReference>
<dbReference type="GO" id="GO:0016730">
    <property type="term" value="F:oxidoreductase activity, acting on iron-sulfur proteins as donors"/>
    <property type="evidence" value="ECO:0007669"/>
    <property type="project" value="InterPro"/>
</dbReference>
<dbReference type="GO" id="GO:0016636">
    <property type="term" value="F:oxidoreductase activity, acting on the CH-CH group of donors, iron-sulfur protein as acceptor"/>
    <property type="evidence" value="ECO:0007669"/>
    <property type="project" value="UniProtKB-UniRule"/>
</dbReference>
<dbReference type="GO" id="GO:0036070">
    <property type="term" value="P:light-independent bacteriochlorophyll biosynthetic process"/>
    <property type="evidence" value="ECO:0007669"/>
    <property type="project" value="UniProtKB-UniRule"/>
</dbReference>
<dbReference type="GO" id="GO:0019685">
    <property type="term" value="P:photosynthesis, dark reaction"/>
    <property type="evidence" value="ECO:0007669"/>
    <property type="project" value="InterPro"/>
</dbReference>
<dbReference type="Gene3D" id="3.40.50.300">
    <property type="entry name" value="P-loop containing nucleotide triphosphate hydrolases"/>
    <property type="match status" value="1"/>
</dbReference>
<dbReference type="HAMAP" id="MF_00355">
    <property type="entry name" value="ChlL_BchL"/>
    <property type="match status" value="1"/>
</dbReference>
<dbReference type="InterPro" id="IPR030655">
    <property type="entry name" value="NifH/chlL_CS"/>
</dbReference>
<dbReference type="InterPro" id="IPR000392">
    <property type="entry name" value="NifH/frxC"/>
</dbReference>
<dbReference type="InterPro" id="IPR027417">
    <property type="entry name" value="P-loop_NTPase"/>
</dbReference>
<dbReference type="InterPro" id="IPR005971">
    <property type="entry name" value="Protochlorophyllide_ATP-bd"/>
</dbReference>
<dbReference type="NCBIfam" id="TIGR01281">
    <property type="entry name" value="DPOR_bchL"/>
    <property type="match status" value="1"/>
</dbReference>
<dbReference type="PANTHER" id="PTHR42864">
    <property type="entry name" value="LIGHT-INDEPENDENT PROTOCHLOROPHYLLIDE REDUCTASE IRON-SULFUR ATP-BINDING PROTEIN"/>
    <property type="match status" value="1"/>
</dbReference>
<dbReference type="PANTHER" id="PTHR42864:SF2">
    <property type="entry name" value="LIGHT-INDEPENDENT PROTOCHLOROPHYLLIDE REDUCTASE IRON-SULFUR ATP-BINDING PROTEIN"/>
    <property type="match status" value="1"/>
</dbReference>
<dbReference type="Pfam" id="PF00142">
    <property type="entry name" value="Fer4_NifH"/>
    <property type="match status" value="1"/>
</dbReference>
<dbReference type="PIRSF" id="PIRSF000363">
    <property type="entry name" value="Nitrogenase_iron"/>
    <property type="match status" value="1"/>
</dbReference>
<dbReference type="PRINTS" id="PR00091">
    <property type="entry name" value="NITROGNASEII"/>
</dbReference>
<dbReference type="SUPFAM" id="SSF52540">
    <property type="entry name" value="P-loop containing nucleoside triphosphate hydrolases"/>
    <property type="match status" value="1"/>
</dbReference>
<dbReference type="PROSITE" id="PS00746">
    <property type="entry name" value="NIFH_FRXC_1"/>
    <property type="match status" value="1"/>
</dbReference>
<dbReference type="PROSITE" id="PS00692">
    <property type="entry name" value="NIFH_FRXC_2"/>
    <property type="match status" value="1"/>
</dbReference>
<dbReference type="PROSITE" id="PS51026">
    <property type="entry name" value="NIFH_FRXC_3"/>
    <property type="match status" value="1"/>
</dbReference>
<evidence type="ECO:0000255" key="1">
    <source>
        <dbReference type="HAMAP-Rule" id="MF_00355"/>
    </source>
</evidence>
<keyword id="KW-0004">4Fe-4S</keyword>
<keyword id="KW-0067">ATP-binding</keyword>
<keyword id="KW-0077">Bacteriochlorophyll biosynthesis</keyword>
<keyword id="KW-0149">Chlorophyll biosynthesis</keyword>
<keyword id="KW-0408">Iron</keyword>
<keyword id="KW-0411">Iron-sulfur</keyword>
<keyword id="KW-0460">Magnesium</keyword>
<keyword id="KW-0479">Metal-binding</keyword>
<keyword id="KW-0547">Nucleotide-binding</keyword>
<keyword id="KW-0560">Oxidoreductase</keyword>
<keyword id="KW-0602">Photosynthesis</keyword>
<keyword id="KW-1185">Reference proteome</keyword>
<comment type="function">
    <text evidence="1">Component of the dark-operative protochlorophyllide reductase (DPOR) that uses Mg-ATP and reduced ferredoxin to reduce ring D of protochlorophyllide (Pchlide) to form chlorophyllide a (Chlide). This reaction is light-independent. The L component serves as a unique electron donor to the NB-component of the complex, and binds Mg-ATP.</text>
</comment>
<comment type="catalytic activity">
    <reaction evidence="1">
        <text>chlorophyllide a + oxidized 2[4Fe-4S]-[ferredoxin] + 2 ADP + 2 phosphate = protochlorophyllide a + reduced 2[4Fe-4S]-[ferredoxin] + 2 ATP + 2 H2O</text>
        <dbReference type="Rhea" id="RHEA:28202"/>
        <dbReference type="Rhea" id="RHEA-COMP:10002"/>
        <dbReference type="Rhea" id="RHEA-COMP:10004"/>
        <dbReference type="ChEBI" id="CHEBI:15377"/>
        <dbReference type="ChEBI" id="CHEBI:30616"/>
        <dbReference type="ChEBI" id="CHEBI:33722"/>
        <dbReference type="ChEBI" id="CHEBI:33723"/>
        <dbReference type="ChEBI" id="CHEBI:43474"/>
        <dbReference type="ChEBI" id="CHEBI:83348"/>
        <dbReference type="ChEBI" id="CHEBI:83350"/>
        <dbReference type="ChEBI" id="CHEBI:456216"/>
        <dbReference type="EC" id="1.3.7.7"/>
    </reaction>
</comment>
<comment type="cofactor">
    <cofactor evidence="1">
        <name>[4Fe-4S] cluster</name>
        <dbReference type="ChEBI" id="CHEBI:49883"/>
    </cofactor>
    <text evidence="1">Binds 1 [4Fe-4S] cluster per dimer.</text>
</comment>
<comment type="pathway">
    <text evidence="1">Porphyrin-containing compound metabolism; bacteriochlorophyll biosynthesis (light-independent).</text>
</comment>
<comment type="subunit">
    <text evidence="1">Homodimer. Protochlorophyllide reductase is composed of three subunits; BchL, BchN and BchB.</text>
</comment>
<comment type="similarity">
    <text evidence="1">Belongs to the NifH/BchL/ChlL family.</text>
</comment>
<feature type="chain" id="PRO_1000120553" description="Light-independent protochlorophyllide reductase iron-sulfur ATP-binding protein">
    <location>
        <begin position="1"/>
        <end position="274"/>
    </location>
</feature>
<feature type="binding site" evidence="1">
    <location>
        <begin position="12"/>
        <end position="17"/>
    </location>
    <ligand>
        <name>ATP</name>
        <dbReference type="ChEBI" id="CHEBI:30616"/>
    </ligand>
</feature>
<feature type="binding site" evidence="1">
    <location>
        <position position="16"/>
    </location>
    <ligand>
        <name>Mg(2+)</name>
        <dbReference type="ChEBI" id="CHEBI:18420"/>
    </ligand>
</feature>
<feature type="binding site" evidence="1">
    <location>
        <position position="41"/>
    </location>
    <ligand>
        <name>ATP</name>
        <dbReference type="ChEBI" id="CHEBI:30616"/>
    </ligand>
</feature>
<feature type="binding site" evidence="1">
    <location>
        <position position="97"/>
    </location>
    <ligand>
        <name>[4Fe-4S] cluster</name>
        <dbReference type="ChEBI" id="CHEBI:49883"/>
        <note>ligand shared between dimeric partners</note>
    </ligand>
</feature>
<feature type="binding site" evidence="1">
    <location>
        <position position="131"/>
    </location>
    <ligand>
        <name>[4Fe-4S] cluster</name>
        <dbReference type="ChEBI" id="CHEBI:49883"/>
        <note>ligand shared between dimeric partners</note>
    </ligand>
</feature>